<accession>Q9BPC2</accession>
<feature type="signal peptide" evidence="2">
    <location>
        <begin position="1"/>
        <end position="19"/>
    </location>
</feature>
<feature type="propeptide" id="PRO_0000404822" evidence="1">
    <location>
        <begin position="20"/>
        <end position="46"/>
    </location>
</feature>
<feature type="peptide" id="PRO_0000404823" description="Conotoxin VnMEKL-0111">
    <location>
        <begin position="47"/>
        <end position="77"/>
    </location>
</feature>
<feature type="disulfide bond" evidence="1">
    <location>
        <begin position="50"/>
        <end position="66"/>
    </location>
</feature>
<feature type="disulfide bond" evidence="1">
    <location>
        <begin position="57"/>
        <end position="71"/>
    </location>
</feature>
<feature type="disulfide bond" evidence="1">
    <location>
        <begin position="65"/>
        <end position="75"/>
    </location>
</feature>
<sequence>MEKLTILLLVAAVLMSTQALIQHDGEKSQKAKMKFLTARTLSAKTRGVDCVGLSSYCGPWNNPPCCSWYTCDYYCKF</sequence>
<comment type="subcellular location">
    <subcellularLocation>
        <location evidence="1">Secreted</location>
    </subcellularLocation>
</comment>
<comment type="tissue specificity">
    <text>Expressed by the venom duct.</text>
</comment>
<comment type="domain">
    <text evidence="1">The presence of a 'disulfide through disulfide knot' structurally defines this protein as a knottin.</text>
</comment>
<comment type="domain">
    <text>The cysteine framework is VI/VII (C-C-CC-C-C).</text>
</comment>
<comment type="similarity">
    <text evidence="3">Belongs to the conotoxin O2 superfamily.</text>
</comment>
<name>O266_CONVE</name>
<evidence type="ECO:0000250" key="1"/>
<evidence type="ECO:0000255" key="2"/>
<evidence type="ECO:0000305" key="3"/>
<dbReference type="EMBL" id="AF215012">
    <property type="protein sequence ID" value="AAG60440.1"/>
    <property type="molecule type" value="mRNA"/>
</dbReference>
<dbReference type="ConoServer" id="699">
    <property type="toxin name" value="Vn6.6 precursor"/>
</dbReference>
<dbReference type="GO" id="GO:0005576">
    <property type="term" value="C:extracellular region"/>
    <property type="evidence" value="ECO:0007669"/>
    <property type="project" value="UniProtKB-SubCell"/>
</dbReference>
<dbReference type="GO" id="GO:0008200">
    <property type="term" value="F:ion channel inhibitor activity"/>
    <property type="evidence" value="ECO:0007669"/>
    <property type="project" value="InterPro"/>
</dbReference>
<dbReference type="GO" id="GO:0090729">
    <property type="term" value="F:toxin activity"/>
    <property type="evidence" value="ECO:0007669"/>
    <property type="project" value="UniProtKB-KW"/>
</dbReference>
<dbReference type="InterPro" id="IPR004214">
    <property type="entry name" value="Conotoxin"/>
</dbReference>
<dbReference type="Pfam" id="PF02950">
    <property type="entry name" value="Conotoxin"/>
    <property type="match status" value="1"/>
</dbReference>
<proteinExistence type="evidence at transcript level"/>
<reference key="1">
    <citation type="journal article" date="2001" name="Mol. Biol. Evol.">
        <title>Mechanisms for evolving hypervariability: the case of conopeptides.</title>
        <authorList>
            <person name="Conticello S.G."/>
            <person name="Gilad Y."/>
            <person name="Avidan N."/>
            <person name="Ben-Asher E."/>
            <person name="Levy Z."/>
            <person name="Fainzilber M."/>
        </authorList>
    </citation>
    <scope>NUCLEOTIDE SEQUENCE [MRNA]</scope>
    <source>
        <tissue>Venom duct</tissue>
    </source>
</reference>
<organism>
    <name type="scientific">Conus ventricosus</name>
    <name type="common">Mediterranean cone</name>
    <dbReference type="NCBI Taxonomy" id="117992"/>
    <lineage>
        <taxon>Eukaryota</taxon>
        <taxon>Metazoa</taxon>
        <taxon>Spiralia</taxon>
        <taxon>Lophotrochozoa</taxon>
        <taxon>Mollusca</taxon>
        <taxon>Gastropoda</taxon>
        <taxon>Caenogastropoda</taxon>
        <taxon>Neogastropoda</taxon>
        <taxon>Conoidea</taxon>
        <taxon>Conidae</taxon>
        <taxon>Conus</taxon>
        <taxon>Lautoconus</taxon>
    </lineage>
</organism>
<protein>
    <recommendedName>
        <fullName>Conotoxin VnMEKL-0111</fullName>
    </recommendedName>
    <alternativeName>
        <fullName>Conotoxin VnMEKL-013</fullName>
    </alternativeName>
</protein>
<keyword id="KW-1015">Disulfide bond</keyword>
<keyword id="KW-0960">Knottin</keyword>
<keyword id="KW-0528">Neurotoxin</keyword>
<keyword id="KW-0964">Secreted</keyword>
<keyword id="KW-0732">Signal</keyword>
<keyword id="KW-0800">Toxin</keyword>